<dbReference type="EMBL" id="AF306661">
    <property type="protein sequence ID" value="AAL37042.1"/>
    <property type="molecule type" value="mRNA"/>
</dbReference>
<dbReference type="EMBL" id="D43962">
    <property type="protein sequence ID" value="BAA22602.1"/>
    <property type="molecule type" value="mRNA"/>
</dbReference>
<dbReference type="EMBL" id="AL021636">
    <property type="protein sequence ID" value="CAA16585.1"/>
    <property type="molecule type" value="Genomic_DNA"/>
</dbReference>
<dbReference type="EMBL" id="AL161580">
    <property type="protein sequence ID" value="CAB79922.1"/>
    <property type="molecule type" value="Genomic_DNA"/>
</dbReference>
<dbReference type="EMBL" id="CP002687">
    <property type="protein sequence ID" value="AEE85997.1"/>
    <property type="molecule type" value="Genomic_DNA"/>
</dbReference>
<dbReference type="EMBL" id="BT026033">
    <property type="protein sequence ID" value="ABG48389.1"/>
    <property type="molecule type" value="mRNA"/>
</dbReference>
<dbReference type="EMBL" id="X92394">
    <property type="protein sequence ID" value="CAA63132.1"/>
    <property type="molecule type" value="mRNA"/>
</dbReference>
<dbReference type="PIR" id="T04641">
    <property type="entry name" value="T04641"/>
</dbReference>
<dbReference type="RefSeq" id="NP_194932.1">
    <property type="nucleotide sequence ID" value="NM_119356.4"/>
</dbReference>
<dbReference type="SMR" id="P48002"/>
<dbReference type="BioGRID" id="14621">
    <property type="interactions" value="26"/>
</dbReference>
<dbReference type="FunCoup" id="P48002">
    <property type="interactions" value="288"/>
</dbReference>
<dbReference type="IntAct" id="P48002">
    <property type="interactions" value="22"/>
</dbReference>
<dbReference type="STRING" id="3702.P48002"/>
<dbReference type="PaxDb" id="3702-AT4G32040.1"/>
<dbReference type="ProteomicsDB" id="237045"/>
<dbReference type="EnsemblPlants" id="AT4G32040.1">
    <property type="protein sequence ID" value="AT4G32040.1"/>
    <property type="gene ID" value="AT4G32040"/>
</dbReference>
<dbReference type="GeneID" id="829335"/>
<dbReference type="Gramene" id="AT4G32040.1">
    <property type="protein sequence ID" value="AT4G32040.1"/>
    <property type="gene ID" value="AT4G32040"/>
</dbReference>
<dbReference type="KEGG" id="ath:AT4G32040"/>
<dbReference type="Araport" id="AT4G32040"/>
<dbReference type="TAIR" id="AT4G32040">
    <property type="gene designation" value="KNAT5"/>
</dbReference>
<dbReference type="eggNOG" id="KOG0773">
    <property type="taxonomic scope" value="Eukaryota"/>
</dbReference>
<dbReference type="HOGENOM" id="CLU_040111_1_0_1"/>
<dbReference type="InParanoid" id="P48002"/>
<dbReference type="OMA" id="DWKSASC"/>
<dbReference type="OrthoDB" id="10056939at2759"/>
<dbReference type="PhylomeDB" id="P48002"/>
<dbReference type="PRO" id="PR:P48002"/>
<dbReference type="Proteomes" id="UP000006548">
    <property type="component" value="Chromosome 4"/>
</dbReference>
<dbReference type="ExpressionAtlas" id="P48002">
    <property type="expression patterns" value="baseline and differential"/>
</dbReference>
<dbReference type="GO" id="GO:0005634">
    <property type="term" value="C:nucleus"/>
    <property type="evidence" value="ECO:0000314"/>
    <property type="project" value="TAIR"/>
</dbReference>
<dbReference type="GO" id="GO:0003677">
    <property type="term" value="F:DNA binding"/>
    <property type="evidence" value="ECO:0007669"/>
    <property type="project" value="UniProtKB-KW"/>
</dbReference>
<dbReference type="GO" id="GO:0003700">
    <property type="term" value="F:DNA-binding transcription factor activity"/>
    <property type="evidence" value="ECO:0000250"/>
    <property type="project" value="TAIR"/>
</dbReference>
<dbReference type="GO" id="GO:0071369">
    <property type="term" value="P:cellular response to ethylene stimulus"/>
    <property type="evidence" value="ECO:0000314"/>
    <property type="project" value="TAIR"/>
</dbReference>
<dbReference type="GO" id="GO:0009727">
    <property type="term" value="P:detection of ethylene stimulus"/>
    <property type="evidence" value="ECO:0000270"/>
    <property type="project" value="TAIR"/>
</dbReference>
<dbReference type="CDD" id="cd00086">
    <property type="entry name" value="homeodomain"/>
    <property type="match status" value="1"/>
</dbReference>
<dbReference type="FunFam" id="1.10.10.60:FF:000143">
    <property type="entry name" value="homeobox protein knotted-1-like 3 isoform X1"/>
    <property type="match status" value="1"/>
</dbReference>
<dbReference type="Gene3D" id="1.10.10.60">
    <property type="entry name" value="Homeodomain-like"/>
    <property type="match status" value="1"/>
</dbReference>
<dbReference type="InterPro" id="IPR005539">
    <property type="entry name" value="ELK_dom"/>
</dbReference>
<dbReference type="InterPro" id="IPR001356">
    <property type="entry name" value="HD"/>
</dbReference>
<dbReference type="InterPro" id="IPR009057">
    <property type="entry name" value="Homeodomain-like_sf"/>
</dbReference>
<dbReference type="InterPro" id="IPR008422">
    <property type="entry name" value="KN_HD"/>
</dbReference>
<dbReference type="InterPro" id="IPR005540">
    <property type="entry name" value="KNOX1"/>
</dbReference>
<dbReference type="InterPro" id="IPR005541">
    <property type="entry name" value="KNOX2"/>
</dbReference>
<dbReference type="InterPro" id="IPR050224">
    <property type="entry name" value="TALE_homeobox"/>
</dbReference>
<dbReference type="PANTHER" id="PTHR11850">
    <property type="entry name" value="HOMEOBOX PROTEIN TRANSCRIPTION FACTORS"/>
    <property type="match status" value="1"/>
</dbReference>
<dbReference type="Pfam" id="PF03789">
    <property type="entry name" value="ELK"/>
    <property type="match status" value="1"/>
</dbReference>
<dbReference type="Pfam" id="PF05920">
    <property type="entry name" value="Homeobox_KN"/>
    <property type="match status" value="1"/>
</dbReference>
<dbReference type="Pfam" id="PF03790">
    <property type="entry name" value="KNOX1"/>
    <property type="match status" value="1"/>
</dbReference>
<dbReference type="Pfam" id="PF03791">
    <property type="entry name" value="KNOX2"/>
    <property type="match status" value="1"/>
</dbReference>
<dbReference type="SMART" id="SM01188">
    <property type="entry name" value="ELK"/>
    <property type="match status" value="1"/>
</dbReference>
<dbReference type="SMART" id="SM00389">
    <property type="entry name" value="HOX"/>
    <property type="match status" value="1"/>
</dbReference>
<dbReference type="SMART" id="SM01255">
    <property type="entry name" value="KNOX1"/>
    <property type="match status" value="1"/>
</dbReference>
<dbReference type="SMART" id="SM01256">
    <property type="entry name" value="KNOX2"/>
    <property type="match status" value="1"/>
</dbReference>
<dbReference type="SUPFAM" id="SSF46689">
    <property type="entry name" value="Homeodomain-like"/>
    <property type="match status" value="1"/>
</dbReference>
<dbReference type="PROSITE" id="PS51213">
    <property type="entry name" value="ELK"/>
    <property type="match status" value="1"/>
</dbReference>
<dbReference type="PROSITE" id="PS00027">
    <property type="entry name" value="HOMEOBOX_1"/>
    <property type="match status" value="1"/>
</dbReference>
<dbReference type="PROSITE" id="PS50071">
    <property type="entry name" value="HOMEOBOX_2"/>
    <property type="match status" value="1"/>
</dbReference>
<sequence>MSFNSSHLLPPQEDLPLRHFTDQSQQPPPQRHFSETPSLVTASFLNLPTTLTTADSDLAPPHRNGDNSVADTNPRWLSFHSEMQNTGEVRSEVIDGVNADGETILGVVGGEDWRSASYKAAILRHPMYEQLLAAHVACLRVATPVDQIPRIDAQLSQLHTVAAKYSTLGVVVDNKELDHFMSHYVVLLCSFKEQLQHHVCVHAMEAITACWEIEQSLQSLTGVSPSESNGKTMSDDEDDNQVESEVNMFDGSLDGSDCLMGFGPLVPTERERSLMERVKKELKHELKQGFKEKIVDIREEIMRKRRAGKLPGDTTSVLKEWWRTHSKWPYPTEEDKAKLVQETGLQLKQINNWFINQRKRNWNSNSSTSSTLTKNKRKRTGKS</sequence>
<feature type="chain" id="PRO_0000048961" description="Homeobox protein knotted-1-like 5">
    <location>
        <begin position="1"/>
        <end position="383"/>
    </location>
</feature>
<feature type="domain" description="ELK" evidence="2">
    <location>
        <begin position="281"/>
        <end position="301"/>
    </location>
</feature>
<feature type="DNA-binding region" description="Homeobox; TALE-type" evidence="1">
    <location>
        <begin position="302"/>
        <end position="365"/>
    </location>
</feature>
<feature type="region of interest" description="Disordered" evidence="3">
    <location>
        <begin position="1"/>
        <end position="35"/>
    </location>
</feature>
<feature type="region of interest" description="Disordered" evidence="3">
    <location>
        <begin position="52"/>
        <end position="73"/>
    </location>
</feature>
<feature type="region of interest" description="Disordered" evidence="3">
    <location>
        <begin position="361"/>
        <end position="383"/>
    </location>
</feature>
<feature type="compositionally biased region" description="Low complexity" evidence="3">
    <location>
        <begin position="362"/>
        <end position="373"/>
    </location>
</feature>
<feature type="compositionally biased region" description="Basic residues" evidence="3">
    <location>
        <begin position="374"/>
        <end position="383"/>
    </location>
</feature>
<name>KNAT5_ARATH</name>
<evidence type="ECO:0000255" key="1">
    <source>
        <dbReference type="PROSITE-ProRule" id="PRU00108"/>
    </source>
</evidence>
<evidence type="ECO:0000255" key="2">
    <source>
        <dbReference type="PROSITE-ProRule" id="PRU00559"/>
    </source>
</evidence>
<evidence type="ECO:0000256" key="3">
    <source>
        <dbReference type="SAM" id="MobiDB-lite"/>
    </source>
</evidence>
<evidence type="ECO:0000269" key="4">
    <source>
    </source>
</evidence>
<evidence type="ECO:0000269" key="5">
    <source>
    </source>
</evidence>
<evidence type="ECO:0000269" key="6">
    <source>
    </source>
</evidence>
<evidence type="ECO:0000305" key="7"/>
<keyword id="KW-0238">DNA-binding</keyword>
<keyword id="KW-0371">Homeobox</keyword>
<keyword id="KW-0539">Nucleus</keyword>
<keyword id="KW-1185">Reference proteome</keyword>
<protein>
    <recommendedName>
        <fullName>Homeobox protein knotted-1-like 5</fullName>
    </recommendedName>
    <alternativeName>
        <fullName>Homeodomain-containing protein 1</fullName>
    </alternativeName>
    <alternativeName>
        <fullName>Protein KNAT5</fullName>
    </alternativeName>
</protein>
<accession>P48002</accession>
<accession>O49387</accession>
<accession>Q548P2</accession>
<proteinExistence type="evidence at protein level"/>
<organism>
    <name type="scientific">Arabidopsis thaliana</name>
    <name type="common">Mouse-ear cress</name>
    <dbReference type="NCBI Taxonomy" id="3702"/>
    <lineage>
        <taxon>Eukaryota</taxon>
        <taxon>Viridiplantae</taxon>
        <taxon>Streptophyta</taxon>
        <taxon>Embryophyta</taxon>
        <taxon>Tracheophyta</taxon>
        <taxon>Spermatophyta</taxon>
        <taxon>Magnoliopsida</taxon>
        <taxon>eudicotyledons</taxon>
        <taxon>Gunneridae</taxon>
        <taxon>Pentapetalae</taxon>
        <taxon>rosids</taxon>
        <taxon>malvids</taxon>
        <taxon>Brassicales</taxon>
        <taxon>Brassicaceae</taxon>
        <taxon>Camelineae</taxon>
        <taxon>Arabidopsis</taxon>
    </lineage>
</organism>
<gene>
    <name type="primary">KNAT5</name>
    <name type="synonym">ATH1</name>
    <name type="ordered locus">At4g32040</name>
    <name type="ORF">F10N7.150</name>
</gene>
<comment type="subunit">
    <text evidence="4 5 6">May form heterodimeric complex with the TALE/BELL protein BEL1, BLH1 and BLH2. Interacts with OFP1, OFP2, OFP3 and OFP4.</text>
</comment>
<comment type="interaction">
    <interactant intactId="EBI-1153922">
        <id>P48002</id>
    </interactant>
    <interactant intactId="EBI-1153783">
        <id>Q38897</id>
        <label>BEL1</label>
    </interactant>
    <organismsDiffer>false</organismsDiffer>
    <experiments>3</experiments>
</comment>
<comment type="interaction">
    <interactant intactId="EBI-1153922">
        <id>P48002</id>
    </interactant>
    <interactant intactId="EBI-1153895">
        <id>Q9FXG8</id>
        <label>BLH10</label>
    </interactant>
    <organismsDiffer>false</organismsDiffer>
    <experiments>3</experiments>
</comment>
<comment type="subcellular location">
    <subcellularLocation>
        <location evidence="7">Nucleus</location>
    </subcellularLocation>
</comment>
<comment type="similarity">
    <text evidence="2">Belongs to the TALE/KNOX homeobox family.</text>
</comment>
<reference key="1">
    <citation type="journal article" date="2001" name="Plant Cell">
        <title>The Arabidopsis BELL1 and KNOX TALE homeodomain proteins interact through a domain conserved between plants and animals.</title>
        <authorList>
            <person name="Bellaoui M."/>
            <person name="Pidkowich M.S."/>
            <person name="Samach A."/>
            <person name="Kushalappa K."/>
            <person name="Kohalmi S.E."/>
            <person name="Modrusan Z."/>
            <person name="Crosby W.L."/>
            <person name="Haughn G.W."/>
        </authorList>
    </citation>
    <scope>NUCLEOTIDE SEQUENCE [MRNA]</scope>
    <scope>INTERACTION WITH BEL1</scope>
    <source>
        <strain>cv. Columbia</strain>
    </source>
</reference>
<reference key="2">
    <citation type="submission" date="1994-12" db="EMBL/GenBank/DDBJ databases">
        <title>A novel homeobox-containing gene with enriched expression in leaves of Arabidopsis thaliana.</title>
        <authorList>
            <person name="Koganeya T."/>
            <person name="Fujisawa T."/>
            <person name="Tasaka M."/>
        </authorList>
    </citation>
    <scope>NUCLEOTIDE SEQUENCE [MRNA]</scope>
    <source>
        <strain>cv. Columbia</strain>
        <tissue>Leaf</tissue>
    </source>
</reference>
<reference key="3">
    <citation type="journal article" date="1999" name="Nature">
        <title>Sequence and analysis of chromosome 4 of the plant Arabidopsis thaliana.</title>
        <authorList>
            <person name="Mayer K.F.X."/>
            <person name="Schueller C."/>
            <person name="Wambutt R."/>
            <person name="Murphy G."/>
            <person name="Volckaert G."/>
            <person name="Pohl T."/>
            <person name="Duesterhoeft A."/>
            <person name="Stiekema W."/>
            <person name="Entian K.-D."/>
            <person name="Terryn N."/>
            <person name="Harris B."/>
            <person name="Ansorge W."/>
            <person name="Brandt P."/>
            <person name="Grivell L.A."/>
            <person name="Rieger M."/>
            <person name="Weichselgartner M."/>
            <person name="de Simone V."/>
            <person name="Obermaier B."/>
            <person name="Mache R."/>
            <person name="Mueller M."/>
            <person name="Kreis M."/>
            <person name="Delseny M."/>
            <person name="Puigdomenech P."/>
            <person name="Watson M."/>
            <person name="Schmidtheini T."/>
            <person name="Reichert B."/>
            <person name="Portetelle D."/>
            <person name="Perez-Alonso M."/>
            <person name="Boutry M."/>
            <person name="Bancroft I."/>
            <person name="Vos P."/>
            <person name="Hoheisel J."/>
            <person name="Zimmermann W."/>
            <person name="Wedler H."/>
            <person name="Ridley P."/>
            <person name="Langham S.-A."/>
            <person name="McCullagh B."/>
            <person name="Bilham L."/>
            <person name="Robben J."/>
            <person name="van der Schueren J."/>
            <person name="Grymonprez B."/>
            <person name="Chuang Y.-J."/>
            <person name="Vandenbussche F."/>
            <person name="Braeken M."/>
            <person name="Weltjens I."/>
            <person name="Voet M."/>
            <person name="Bastiaens I."/>
            <person name="Aert R."/>
            <person name="Defoor E."/>
            <person name="Weitzenegger T."/>
            <person name="Bothe G."/>
            <person name="Ramsperger U."/>
            <person name="Hilbert H."/>
            <person name="Braun M."/>
            <person name="Holzer E."/>
            <person name="Brandt A."/>
            <person name="Peters S."/>
            <person name="van Staveren M."/>
            <person name="Dirkse W."/>
            <person name="Mooijman P."/>
            <person name="Klein Lankhorst R."/>
            <person name="Rose M."/>
            <person name="Hauf J."/>
            <person name="Koetter P."/>
            <person name="Berneiser S."/>
            <person name="Hempel S."/>
            <person name="Feldpausch M."/>
            <person name="Lamberth S."/>
            <person name="Van den Daele H."/>
            <person name="De Keyser A."/>
            <person name="Buysshaert C."/>
            <person name="Gielen J."/>
            <person name="Villarroel R."/>
            <person name="De Clercq R."/>
            <person name="van Montagu M."/>
            <person name="Rogers J."/>
            <person name="Cronin A."/>
            <person name="Quail M.A."/>
            <person name="Bray-Allen S."/>
            <person name="Clark L."/>
            <person name="Doggett J."/>
            <person name="Hall S."/>
            <person name="Kay M."/>
            <person name="Lennard N."/>
            <person name="McLay K."/>
            <person name="Mayes R."/>
            <person name="Pettett A."/>
            <person name="Rajandream M.A."/>
            <person name="Lyne M."/>
            <person name="Benes V."/>
            <person name="Rechmann S."/>
            <person name="Borkova D."/>
            <person name="Bloecker H."/>
            <person name="Scharfe M."/>
            <person name="Grimm M."/>
            <person name="Loehnert T.-H."/>
            <person name="Dose S."/>
            <person name="de Haan M."/>
            <person name="Maarse A.C."/>
            <person name="Schaefer M."/>
            <person name="Mueller-Auer S."/>
            <person name="Gabel C."/>
            <person name="Fuchs M."/>
            <person name="Fartmann B."/>
            <person name="Granderath K."/>
            <person name="Dauner D."/>
            <person name="Herzl A."/>
            <person name="Neumann S."/>
            <person name="Argiriou A."/>
            <person name="Vitale D."/>
            <person name="Liguori R."/>
            <person name="Piravandi E."/>
            <person name="Massenet O."/>
            <person name="Quigley F."/>
            <person name="Clabauld G."/>
            <person name="Muendlein A."/>
            <person name="Felber R."/>
            <person name="Schnabl S."/>
            <person name="Hiller R."/>
            <person name="Schmidt W."/>
            <person name="Lecharny A."/>
            <person name="Aubourg S."/>
            <person name="Chefdor F."/>
            <person name="Cooke R."/>
            <person name="Berger C."/>
            <person name="Monfort A."/>
            <person name="Casacuberta E."/>
            <person name="Gibbons T."/>
            <person name="Weber N."/>
            <person name="Vandenbol M."/>
            <person name="Bargues M."/>
            <person name="Terol J."/>
            <person name="Torres A."/>
            <person name="Perez-Perez A."/>
            <person name="Purnelle B."/>
            <person name="Bent E."/>
            <person name="Johnson S."/>
            <person name="Tacon D."/>
            <person name="Jesse T."/>
            <person name="Heijnen L."/>
            <person name="Schwarz S."/>
            <person name="Scholler P."/>
            <person name="Heber S."/>
            <person name="Francs P."/>
            <person name="Bielke C."/>
            <person name="Frishman D."/>
            <person name="Haase D."/>
            <person name="Lemcke K."/>
            <person name="Mewes H.-W."/>
            <person name="Stocker S."/>
            <person name="Zaccaria P."/>
            <person name="Bevan M."/>
            <person name="Wilson R.K."/>
            <person name="de la Bastide M."/>
            <person name="Habermann K."/>
            <person name="Parnell L."/>
            <person name="Dedhia N."/>
            <person name="Gnoj L."/>
            <person name="Schutz K."/>
            <person name="Huang E."/>
            <person name="Spiegel L."/>
            <person name="Sekhon M."/>
            <person name="Murray J."/>
            <person name="Sheet P."/>
            <person name="Cordes M."/>
            <person name="Abu-Threideh J."/>
            <person name="Stoneking T."/>
            <person name="Kalicki J."/>
            <person name="Graves T."/>
            <person name="Harmon G."/>
            <person name="Edwards J."/>
            <person name="Latreille P."/>
            <person name="Courtney L."/>
            <person name="Cloud J."/>
            <person name="Abbott A."/>
            <person name="Scott K."/>
            <person name="Johnson D."/>
            <person name="Minx P."/>
            <person name="Bentley D."/>
            <person name="Fulton B."/>
            <person name="Miller N."/>
            <person name="Greco T."/>
            <person name="Kemp K."/>
            <person name="Kramer J."/>
            <person name="Fulton L."/>
            <person name="Mardis E."/>
            <person name="Dante M."/>
            <person name="Pepin K."/>
            <person name="Hillier L.W."/>
            <person name="Nelson J."/>
            <person name="Spieth J."/>
            <person name="Ryan E."/>
            <person name="Andrews S."/>
            <person name="Geisel C."/>
            <person name="Layman D."/>
            <person name="Du H."/>
            <person name="Ali J."/>
            <person name="Berghoff A."/>
            <person name="Jones K."/>
            <person name="Drone K."/>
            <person name="Cotton M."/>
            <person name="Joshu C."/>
            <person name="Antonoiu B."/>
            <person name="Zidanic M."/>
            <person name="Strong C."/>
            <person name="Sun H."/>
            <person name="Lamar B."/>
            <person name="Yordan C."/>
            <person name="Ma P."/>
            <person name="Zhong J."/>
            <person name="Preston R."/>
            <person name="Vil D."/>
            <person name="Shekher M."/>
            <person name="Matero A."/>
            <person name="Shah R."/>
            <person name="Swaby I.K."/>
            <person name="O'Shaughnessy A."/>
            <person name="Rodriguez M."/>
            <person name="Hoffman J."/>
            <person name="Till S."/>
            <person name="Granat S."/>
            <person name="Shohdy N."/>
            <person name="Hasegawa A."/>
            <person name="Hameed A."/>
            <person name="Lodhi M."/>
            <person name="Johnson A."/>
            <person name="Chen E."/>
            <person name="Marra M.A."/>
            <person name="Martienssen R."/>
            <person name="McCombie W.R."/>
        </authorList>
    </citation>
    <scope>NUCLEOTIDE SEQUENCE [LARGE SCALE GENOMIC DNA]</scope>
    <source>
        <strain>cv. Columbia</strain>
    </source>
</reference>
<reference key="4">
    <citation type="journal article" date="2017" name="Plant J.">
        <title>Araport11: a complete reannotation of the Arabidopsis thaliana reference genome.</title>
        <authorList>
            <person name="Cheng C.Y."/>
            <person name="Krishnakumar V."/>
            <person name="Chan A.P."/>
            <person name="Thibaud-Nissen F."/>
            <person name="Schobel S."/>
            <person name="Town C.D."/>
        </authorList>
    </citation>
    <scope>GENOME REANNOTATION</scope>
    <source>
        <strain>cv. Columbia</strain>
    </source>
</reference>
<reference key="5">
    <citation type="submission" date="2006-07" db="EMBL/GenBank/DDBJ databases">
        <title>Arabidopsis ORF clone.</title>
        <authorList>
            <person name="Quinitio C."/>
            <person name="Chen H."/>
            <person name="Kim C.J."/>
            <person name="Shinn P."/>
            <person name="Ecker J.R."/>
        </authorList>
    </citation>
    <scope>NUCLEOTIDE SEQUENCE [LARGE SCALE MRNA]</scope>
    <source>
        <strain>cv. Columbia</strain>
    </source>
</reference>
<reference key="6">
    <citation type="journal article" date="1996" name="Plant Mol. Biol.">
        <title>Three knotted1-like homeobox genes in Arabidopsis.</title>
        <authorList>
            <person name="Serikawa K.A."/>
            <person name="Martinez-Laborda A."/>
            <person name="Zambryski P.C."/>
        </authorList>
    </citation>
    <scope>NUCLEOTIDE SEQUENCE [MRNA] OF 280-383</scope>
</reference>
<reference key="7">
    <citation type="journal article" date="2005" name="Proc. Natl. Acad. Sci. U.S.A.">
        <title>A central role of Arabidopsis thaliana ovate family proteins in networking and subcellular localization of 3-aa loop extension homeodomain proteins.</title>
        <authorList>
            <person name="Hackbusch J."/>
            <person name="Richter K."/>
            <person name="Muller J."/>
            <person name="Salamini F."/>
            <person name="Uhrig J.F."/>
        </authorList>
    </citation>
    <scope>INTERACTION WITH OFP1; OFP2; OFP3 AND OFP4</scope>
</reference>
<reference key="8">
    <citation type="journal article" date="2007" name="Plant Cell">
        <title>The Arabidopsis BEL1-LIKE HOMEODOMAIN proteins SAW1 and SAW2 act redundantly to regulate KNOX expression spatially in leaf margins.</title>
        <authorList>
            <person name="Kumar R."/>
            <person name="Kushalappa K."/>
            <person name="Godt D."/>
            <person name="Pidkowich M.S."/>
            <person name="Pastorelli S."/>
            <person name="Hepworth S.R."/>
            <person name="Haughn G.W."/>
        </authorList>
    </citation>
    <scope>INTERACTION WITH BEL1; BLH1 AND BLH2</scope>
</reference>